<protein>
    <recommendedName>
        <fullName evidence="1">DNA ligase 2</fullName>
        <ecNumber evidence="1">6.5.1.2</ecNumber>
    </recommendedName>
    <alternativeName>
        <fullName evidence="1">Polydeoxyribonucleotide synthase [NAD(+)] 2</fullName>
    </alternativeName>
</protein>
<evidence type="ECO:0000255" key="1">
    <source>
        <dbReference type="HAMAP-Rule" id="MF_01588"/>
    </source>
</evidence>
<evidence type="ECO:0000256" key="2">
    <source>
        <dbReference type="SAM" id="MobiDB-lite"/>
    </source>
</evidence>
<geneLocation type="plasmid">
    <name>pACHL01</name>
</geneLocation>
<comment type="function">
    <text evidence="1">DNA ligase that catalyzes the formation of phosphodiester linkages between 5'-phosphoryl and 3'-hydroxyl groups in double-stranded DNA using NAD as a coenzyme and as the energy source for the reaction. It is essential for DNA replication and repair of damaged DNA.</text>
</comment>
<comment type="catalytic activity">
    <reaction evidence="1">
        <text>NAD(+) + (deoxyribonucleotide)n-3'-hydroxyl + 5'-phospho-(deoxyribonucleotide)m = (deoxyribonucleotide)n+m + AMP + beta-nicotinamide D-nucleotide.</text>
        <dbReference type="EC" id="6.5.1.2"/>
    </reaction>
</comment>
<comment type="cofactor">
    <cofactor evidence="1">
        <name>Mg(2+)</name>
        <dbReference type="ChEBI" id="CHEBI:18420"/>
    </cofactor>
    <cofactor evidence="1">
        <name>Mn(2+)</name>
        <dbReference type="ChEBI" id="CHEBI:29035"/>
    </cofactor>
</comment>
<comment type="similarity">
    <text evidence="1">Belongs to the NAD-dependent DNA ligase family. LigA subfamily.</text>
</comment>
<accession>B8HIQ9</accession>
<dbReference type="EC" id="6.5.1.2" evidence="1"/>
<dbReference type="EMBL" id="CP001342">
    <property type="protein sequence ID" value="ACL42306.1"/>
    <property type="molecule type" value="Genomic_DNA"/>
</dbReference>
<dbReference type="RefSeq" id="WP_012623323.1">
    <property type="nucleotide sequence ID" value="NC_011879.1"/>
</dbReference>
<dbReference type="SMR" id="B8HIQ9"/>
<dbReference type="KEGG" id="ach:Achl_4355"/>
<dbReference type="HOGENOM" id="CLU_007764_2_0_11"/>
<dbReference type="OrthoDB" id="9759736at2"/>
<dbReference type="Proteomes" id="UP000002505">
    <property type="component" value="Plasmid pACHL01"/>
</dbReference>
<dbReference type="GO" id="GO:0003911">
    <property type="term" value="F:DNA ligase (NAD+) activity"/>
    <property type="evidence" value="ECO:0007669"/>
    <property type="project" value="UniProtKB-UniRule"/>
</dbReference>
<dbReference type="GO" id="GO:0046872">
    <property type="term" value="F:metal ion binding"/>
    <property type="evidence" value="ECO:0007669"/>
    <property type="project" value="UniProtKB-KW"/>
</dbReference>
<dbReference type="GO" id="GO:0006281">
    <property type="term" value="P:DNA repair"/>
    <property type="evidence" value="ECO:0007669"/>
    <property type="project" value="UniProtKB-KW"/>
</dbReference>
<dbReference type="GO" id="GO:0006260">
    <property type="term" value="P:DNA replication"/>
    <property type="evidence" value="ECO:0007669"/>
    <property type="project" value="UniProtKB-KW"/>
</dbReference>
<dbReference type="CDD" id="cd17748">
    <property type="entry name" value="BRCT_DNA_ligase_like"/>
    <property type="match status" value="1"/>
</dbReference>
<dbReference type="Gene3D" id="3.30.1490.70">
    <property type="match status" value="1"/>
</dbReference>
<dbReference type="Gene3D" id="1.10.150.20">
    <property type="entry name" value="5' to 3' exonuclease, C-terminal subdomain"/>
    <property type="match status" value="2"/>
</dbReference>
<dbReference type="Gene3D" id="3.40.50.10190">
    <property type="entry name" value="BRCT domain"/>
    <property type="match status" value="1"/>
</dbReference>
<dbReference type="Gene3D" id="3.30.470.30">
    <property type="entry name" value="DNA ligase/mRNA capping enzyme"/>
    <property type="match status" value="1"/>
</dbReference>
<dbReference type="Gene3D" id="2.40.50.140">
    <property type="entry name" value="Nucleic acid-binding proteins"/>
    <property type="match status" value="1"/>
</dbReference>
<dbReference type="HAMAP" id="MF_01588">
    <property type="entry name" value="DNA_ligase_A"/>
    <property type="match status" value="1"/>
</dbReference>
<dbReference type="InterPro" id="IPR001357">
    <property type="entry name" value="BRCT_dom"/>
</dbReference>
<dbReference type="InterPro" id="IPR036420">
    <property type="entry name" value="BRCT_dom_sf"/>
</dbReference>
<dbReference type="InterPro" id="IPR041663">
    <property type="entry name" value="DisA/LigA_HHH"/>
</dbReference>
<dbReference type="InterPro" id="IPR001679">
    <property type="entry name" value="DNA_ligase"/>
</dbReference>
<dbReference type="InterPro" id="IPR013839">
    <property type="entry name" value="DNAligase_adenylation"/>
</dbReference>
<dbReference type="InterPro" id="IPR013840">
    <property type="entry name" value="DNAligase_N"/>
</dbReference>
<dbReference type="InterPro" id="IPR012340">
    <property type="entry name" value="NA-bd_OB-fold"/>
</dbReference>
<dbReference type="InterPro" id="IPR004150">
    <property type="entry name" value="NAD_DNA_ligase_OB"/>
</dbReference>
<dbReference type="InterPro" id="IPR010994">
    <property type="entry name" value="RuvA_2-like"/>
</dbReference>
<dbReference type="NCBIfam" id="TIGR00575">
    <property type="entry name" value="dnlj"/>
    <property type="match status" value="1"/>
</dbReference>
<dbReference type="NCBIfam" id="NF005932">
    <property type="entry name" value="PRK07956.1"/>
    <property type="match status" value="1"/>
</dbReference>
<dbReference type="Pfam" id="PF00533">
    <property type="entry name" value="BRCT"/>
    <property type="match status" value="1"/>
</dbReference>
<dbReference type="Pfam" id="PF01653">
    <property type="entry name" value="DNA_ligase_aden"/>
    <property type="match status" value="1"/>
</dbReference>
<dbReference type="Pfam" id="PF03120">
    <property type="entry name" value="DNA_ligase_OB"/>
    <property type="match status" value="1"/>
</dbReference>
<dbReference type="Pfam" id="PF12826">
    <property type="entry name" value="HHH_2"/>
    <property type="match status" value="1"/>
</dbReference>
<dbReference type="PIRSF" id="PIRSF001604">
    <property type="entry name" value="LigA"/>
    <property type="match status" value="1"/>
</dbReference>
<dbReference type="SMART" id="SM00292">
    <property type="entry name" value="BRCT"/>
    <property type="match status" value="1"/>
</dbReference>
<dbReference type="SMART" id="SM00532">
    <property type="entry name" value="LIGANc"/>
    <property type="match status" value="1"/>
</dbReference>
<dbReference type="SUPFAM" id="SSF52113">
    <property type="entry name" value="BRCT domain"/>
    <property type="match status" value="1"/>
</dbReference>
<dbReference type="SUPFAM" id="SSF56091">
    <property type="entry name" value="DNA ligase/mRNA capping enzyme, catalytic domain"/>
    <property type="match status" value="1"/>
</dbReference>
<dbReference type="SUPFAM" id="SSF50249">
    <property type="entry name" value="Nucleic acid-binding proteins"/>
    <property type="match status" value="1"/>
</dbReference>
<dbReference type="SUPFAM" id="SSF47781">
    <property type="entry name" value="RuvA domain 2-like"/>
    <property type="match status" value="1"/>
</dbReference>
<dbReference type="PROSITE" id="PS50172">
    <property type="entry name" value="BRCT"/>
    <property type="match status" value="1"/>
</dbReference>
<feature type="chain" id="PRO_0000380294" description="DNA ligase 2">
    <location>
        <begin position="1"/>
        <end position="701"/>
    </location>
</feature>
<feature type="domain" description="BRCT" evidence="1">
    <location>
        <begin position="615"/>
        <end position="701"/>
    </location>
</feature>
<feature type="region of interest" description="Disordered" evidence="2">
    <location>
        <begin position="1"/>
        <end position="21"/>
    </location>
</feature>
<feature type="region of interest" description="Disordered" evidence="2">
    <location>
        <begin position="603"/>
        <end position="623"/>
    </location>
</feature>
<feature type="compositionally biased region" description="Polar residues" evidence="2">
    <location>
        <begin position="1"/>
        <end position="10"/>
    </location>
</feature>
<feature type="compositionally biased region" description="Low complexity" evidence="2">
    <location>
        <begin position="603"/>
        <end position="613"/>
    </location>
</feature>
<feature type="active site" description="N6-AMP-lysine intermediate" evidence="1">
    <location>
        <position position="135"/>
    </location>
</feature>
<feature type="binding site" evidence="1">
    <location>
        <begin position="64"/>
        <end position="68"/>
    </location>
    <ligand>
        <name>NAD(+)</name>
        <dbReference type="ChEBI" id="CHEBI:57540"/>
    </ligand>
</feature>
<feature type="binding site" evidence="1">
    <location>
        <begin position="111"/>
        <end position="112"/>
    </location>
    <ligand>
        <name>NAD(+)</name>
        <dbReference type="ChEBI" id="CHEBI:57540"/>
    </ligand>
</feature>
<feature type="binding site" evidence="1">
    <location>
        <position position="133"/>
    </location>
    <ligand>
        <name>NAD(+)</name>
        <dbReference type="ChEBI" id="CHEBI:57540"/>
    </ligand>
</feature>
<feature type="binding site" evidence="1">
    <location>
        <position position="156"/>
    </location>
    <ligand>
        <name>NAD(+)</name>
        <dbReference type="ChEBI" id="CHEBI:57540"/>
    </ligand>
</feature>
<feature type="binding site" evidence="1">
    <location>
        <position position="189"/>
    </location>
    <ligand>
        <name>NAD(+)</name>
        <dbReference type="ChEBI" id="CHEBI:57540"/>
    </ligand>
</feature>
<feature type="binding site" evidence="1">
    <location>
        <position position="302"/>
    </location>
    <ligand>
        <name>NAD(+)</name>
        <dbReference type="ChEBI" id="CHEBI:57540"/>
    </ligand>
</feature>
<feature type="binding site" evidence="1">
    <location>
        <position position="326"/>
    </location>
    <ligand>
        <name>NAD(+)</name>
        <dbReference type="ChEBI" id="CHEBI:57540"/>
    </ligand>
</feature>
<feature type="binding site" evidence="1">
    <location>
        <position position="420"/>
    </location>
    <ligand>
        <name>Zn(2+)</name>
        <dbReference type="ChEBI" id="CHEBI:29105"/>
    </ligand>
</feature>
<feature type="binding site" evidence="1">
    <location>
        <position position="423"/>
    </location>
    <ligand>
        <name>Zn(2+)</name>
        <dbReference type="ChEBI" id="CHEBI:29105"/>
    </ligand>
</feature>
<feature type="binding site" evidence="1">
    <location>
        <position position="436"/>
    </location>
    <ligand>
        <name>Zn(2+)</name>
        <dbReference type="ChEBI" id="CHEBI:29105"/>
    </ligand>
</feature>
<feature type="binding site" evidence="1">
    <location>
        <position position="441"/>
    </location>
    <ligand>
        <name>Zn(2+)</name>
        <dbReference type="ChEBI" id="CHEBI:29105"/>
    </ligand>
</feature>
<proteinExistence type="inferred from homology"/>
<organism>
    <name type="scientific">Pseudarthrobacter chlorophenolicus (strain ATCC 700700 / DSM 12829 / CIP 107037 / JCM 12360 / KCTC 9906 / NCIMB 13794 / A6)</name>
    <name type="common">Arthrobacter chlorophenolicus</name>
    <dbReference type="NCBI Taxonomy" id="452863"/>
    <lineage>
        <taxon>Bacteria</taxon>
        <taxon>Bacillati</taxon>
        <taxon>Actinomycetota</taxon>
        <taxon>Actinomycetes</taxon>
        <taxon>Micrococcales</taxon>
        <taxon>Micrococcaceae</taxon>
        <taxon>Pseudarthrobacter</taxon>
    </lineage>
</organism>
<reference key="1">
    <citation type="submission" date="2009-01" db="EMBL/GenBank/DDBJ databases">
        <title>Complete sequence of plasmid1 of Arthrobacter chlorophenolicus A6.</title>
        <authorList>
            <consortium name="US DOE Joint Genome Institute"/>
            <person name="Lucas S."/>
            <person name="Copeland A."/>
            <person name="Lapidus A."/>
            <person name="Glavina del Rio T."/>
            <person name="Tice H."/>
            <person name="Bruce D."/>
            <person name="Goodwin L."/>
            <person name="Pitluck S."/>
            <person name="Goltsman E."/>
            <person name="Clum A."/>
            <person name="Larimer F."/>
            <person name="Land M."/>
            <person name="Hauser L."/>
            <person name="Kyrpides N."/>
            <person name="Mikhailova N."/>
            <person name="Jansson J."/>
            <person name="Richardson P."/>
        </authorList>
    </citation>
    <scope>NUCLEOTIDE SEQUENCE [LARGE SCALE GENOMIC DNA]</scope>
    <source>
        <strain>ATCC 700700 / DSM 12829 / CIP 107037 / JCM 12360 / KCTC 9906 / NCIMB 13794 / A6</strain>
    </source>
</reference>
<sequence>MSPAPQNRQPSGVPVGGQFAATNHAEPGIGLATFGSEEEYQAAVTTALSAAKAYETTDVEEMNDAEFDRLLAKIASHEAANGIEPEHDLHDTIGHGGAGGGDVEHATPMKSLEKPGEDAVIEFAAKHPKAVIEPKIDGLAISVRYENGKMVRAARRGDGYTGEDVTDRVRGVDGLPEMAGDGDYEVRGELYLNDENKAKANAIRQAAGKAPFANARNGVAGMLNKQDGSYAGLFSFAAYSTTIDEKADHLDSMQQLEGMGFTTARSLLPQSVLDAEDPMAAIAALGAERKGLNFLMDGAVLKVNTAAERAELGEGSRAPKWAVAYKYPAVEEPTVIEDIEYNIGKTGRLSIRARLTPVEVDGSVVEYASLHNVGHLQAADMRIGDTVSAYKANDIIPQVHLPRADLRDESSQPWQPPSVCPQCSEPFDKSTELWRCHTPECSVSGRISYAASRDAGLDIEGLGGSIGDALIEKDLVKDVSDLFYLGEDQLAEVELGETSTGGTRTLGQKNAAKIMAEIEKAKSQPLNRVITALSMRFTGRTFGRRLAAEFGTMEALQAATVSQLANVEGIGQKKAEVIHEQLKKNAPVIAKLREAGVNMGAPKAAPAAGAKAPKLTKPDGKPMNVVVTGSVKGSPLGSLSRSGVQELIEAKGGKASGSVSKTTDLLVCGEPGSSKFLKAQELGIRIVTPDEFAQMVEDGEV</sequence>
<gene>
    <name evidence="1" type="primary">ligA2</name>
    <name type="ordered locus">Achl_4355</name>
</gene>
<name>DNLJ2_PSECP</name>
<keyword id="KW-0227">DNA damage</keyword>
<keyword id="KW-0234">DNA repair</keyword>
<keyword id="KW-0235">DNA replication</keyword>
<keyword id="KW-0436">Ligase</keyword>
<keyword id="KW-0460">Magnesium</keyword>
<keyword id="KW-0464">Manganese</keyword>
<keyword id="KW-0479">Metal-binding</keyword>
<keyword id="KW-0520">NAD</keyword>
<keyword id="KW-0614">Plasmid</keyword>
<keyword id="KW-0862">Zinc</keyword>